<comment type="function">
    <text evidence="1">Synthesizes alpha-1,4-glucan chains using ADP-glucose.</text>
</comment>
<comment type="catalytic activity">
    <reaction evidence="1">
        <text>[(1-&gt;4)-alpha-D-glucosyl](n) + ADP-alpha-D-glucose = [(1-&gt;4)-alpha-D-glucosyl](n+1) + ADP + H(+)</text>
        <dbReference type="Rhea" id="RHEA:18189"/>
        <dbReference type="Rhea" id="RHEA-COMP:9584"/>
        <dbReference type="Rhea" id="RHEA-COMP:9587"/>
        <dbReference type="ChEBI" id="CHEBI:15378"/>
        <dbReference type="ChEBI" id="CHEBI:15444"/>
        <dbReference type="ChEBI" id="CHEBI:57498"/>
        <dbReference type="ChEBI" id="CHEBI:456216"/>
        <dbReference type="EC" id="2.4.1.21"/>
    </reaction>
</comment>
<comment type="pathway">
    <text evidence="1">Glycan biosynthesis; glycogen biosynthesis.</text>
</comment>
<comment type="similarity">
    <text evidence="1">Belongs to the glycosyltransferase 1 family. Bacterial/plant glycogen synthase subfamily.</text>
</comment>
<feature type="chain" id="PRO_1000014341" description="Glycogen synthase">
    <location>
        <begin position="1"/>
        <end position="486"/>
    </location>
</feature>
<feature type="binding site" evidence="1">
    <location>
        <position position="20"/>
    </location>
    <ligand>
        <name>ADP-alpha-D-glucose</name>
        <dbReference type="ChEBI" id="CHEBI:57498"/>
    </ligand>
</feature>
<accession>A4SIE1</accession>
<evidence type="ECO:0000255" key="1">
    <source>
        <dbReference type="HAMAP-Rule" id="MF_00484"/>
    </source>
</evidence>
<keyword id="KW-0320">Glycogen biosynthesis</keyword>
<keyword id="KW-0328">Glycosyltransferase</keyword>
<keyword id="KW-0808">Transferase</keyword>
<sequence length="486" mass="54921">MAINPLKILFVASEVEGLVKTGGLADVARALPLYLAQKGHDVRIILPFYKTIKRRDEARLIASRWLPTHPGLPDIGYRIYQMELEGVCVYLLDCPQYFDRPQLYAENNQAYGDNGERFAFFSAAALHACEQLDFAPEIVHCNDWHTGLLPLLLKTRHAHNPFFQHTRSVISIHNAAFQGVFGREQFWAMPEIADYEQRISYDYGHVNLLKCGVLYADKINAVSPNYASELLTHLGAHGMANIFQQRAADLRGILNGCDYKDWDPAFDDFLPATYDVDNLAGKRVCKQTLQQEAGLPVTDLPIYGMVCRLTEQKGVHLLLPVLDKFLHHKVQVVIVGSGDPSLAAQLQATAQRYPDKLAFLNTYDDRLAHLVEAGADFFLMPSLFEPCGLNQMYSLAYGTLPLVRAVGGLKDTVVDWDAEPEHATGFCFNDPTANILLDAMRRSLLYYLQDPERFAQVQRNAMNTRFNWPDSVTQYEQMYQDALARQ</sequence>
<gene>
    <name evidence="1" type="primary">glgA</name>
    <name type="ordered locus">ASA_0496</name>
</gene>
<name>GLGA_AERS4</name>
<reference key="1">
    <citation type="journal article" date="2008" name="BMC Genomics">
        <title>The genome of Aeromonas salmonicida subsp. salmonicida A449: insights into the evolution of a fish pathogen.</title>
        <authorList>
            <person name="Reith M.E."/>
            <person name="Singh R.K."/>
            <person name="Curtis B."/>
            <person name="Boyd J.M."/>
            <person name="Bouevitch A."/>
            <person name="Kimball J."/>
            <person name="Munholland J."/>
            <person name="Murphy C."/>
            <person name="Sarty D."/>
            <person name="Williams J."/>
            <person name="Nash J.H."/>
            <person name="Johnson S.C."/>
            <person name="Brown L.L."/>
        </authorList>
    </citation>
    <scope>NUCLEOTIDE SEQUENCE [LARGE SCALE GENOMIC DNA]</scope>
    <source>
        <strain>A449</strain>
    </source>
</reference>
<dbReference type="EC" id="2.4.1.21" evidence="1"/>
<dbReference type="EMBL" id="CP000644">
    <property type="protein sequence ID" value="ABO88663.1"/>
    <property type="molecule type" value="Genomic_DNA"/>
</dbReference>
<dbReference type="RefSeq" id="WP_005314016.1">
    <property type="nucleotide sequence ID" value="NC_009348.1"/>
</dbReference>
<dbReference type="SMR" id="A4SIE1"/>
<dbReference type="STRING" id="29491.GCA_000820065_02953"/>
<dbReference type="CAZy" id="GT5">
    <property type="family name" value="Glycosyltransferase Family 5"/>
</dbReference>
<dbReference type="KEGG" id="asa:ASA_0496"/>
<dbReference type="eggNOG" id="COG0297">
    <property type="taxonomic scope" value="Bacteria"/>
</dbReference>
<dbReference type="HOGENOM" id="CLU_009583_18_2_6"/>
<dbReference type="UniPathway" id="UPA00164"/>
<dbReference type="Proteomes" id="UP000000225">
    <property type="component" value="Chromosome"/>
</dbReference>
<dbReference type="GO" id="GO:0005829">
    <property type="term" value="C:cytosol"/>
    <property type="evidence" value="ECO:0007669"/>
    <property type="project" value="TreeGrafter"/>
</dbReference>
<dbReference type="GO" id="GO:0009011">
    <property type="term" value="F:alpha-1,4-glucan glucosyltransferase (ADP-glucose donor) activity"/>
    <property type="evidence" value="ECO:0007669"/>
    <property type="project" value="UniProtKB-UniRule"/>
</dbReference>
<dbReference type="GO" id="GO:0004373">
    <property type="term" value="F:alpha-1,4-glucan glucosyltransferase (UDP-glucose donor) activity"/>
    <property type="evidence" value="ECO:0007669"/>
    <property type="project" value="InterPro"/>
</dbReference>
<dbReference type="GO" id="GO:0005978">
    <property type="term" value="P:glycogen biosynthetic process"/>
    <property type="evidence" value="ECO:0007669"/>
    <property type="project" value="UniProtKB-UniRule"/>
</dbReference>
<dbReference type="CDD" id="cd03791">
    <property type="entry name" value="GT5_Glycogen_synthase_DULL1-like"/>
    <property type="match status" value="1"/>
</dbReference>
<dbReference type="Gene3D" id="3.40.50.2000">
    <property type="entry name" value="Glycogen Phosphorylase B"/>
    <property type="match status" value="2"/>
</dbReference>
<dbReference type="HAMAP" id="MF_00484">
    <property type="entry name" value="Glycogen_synth"/>
    <property type="match status" value="1"/>
</dbReference>
<dbReference type="InterPro" id="IPR001296">
    <property type="entry name" value="Glyco_trans_1"/>
</dbReference>
<dbReference type="InterPro" id="IPR011835">
    <property type="entry name" value="GS/SS"/>
</dbReference>
<dbReference type="InterPro" id="IPR013534">
    <property type="entry name" value="Starch_synth_cat_dom"/>
</dbReference>
<dbReference type="NCBIfam" id="TIGR02095">
    <property type="entry name" value="glgA"/>
    <property type="match status" value="1"/>
</dbReference>
<dbReference type="NCBIfam" id="NF001903">
    <property type="entry name" value="PRK00654.2-2"/>
    <property type="match status" value="1"/>
</dbReference>
<dbReference type="PANTHER" id="PTHR45825:SF11">
    <property type="entry name" value="ALPHA AMYLASE DOMAIN-CONTAINING PROTEIN"/>
    <property type="match status" value="1"/>
</dbReference>
<dbReference type="PANTHER" id="PTHR45825">
    <property type="entry name" value="GRANULE-BOUND STARCH SYNTHASE 1, CHLOROPLASTIC/AMYLOPLASTIC"/>
    <property type="match status" value="1"/>
</dbReference>
<dbReference type="Pfam" id="PF08323">
    <property type="entry name" value="Glyco_transf_5"/>
    <property type="match status" value="1"/>
</dbReference>
<dbReference type="Pfam" id="PF00534">
    <property type="entry name" value="Glycos_transf_1"/>
    <property type="match status" value="1"/>
</dbReference>
<dbReference type="SUPFAM" id="SSF53756">
    <property type="entry name" value="UDP-Glycosyltransferase/glycogen phosphorylase"/>
    <property type="match status" value="1"/>
</dbReference>
<organism>
    <name type="scientific">Aeromonas salmonicida (strain A449)</name>
    <dbReference type="NCBI Taxonomy" id="382245"/>
    <lineage>
        <taxon>Bacteria</taxon>
        <taxon>Pseudomonadati</taxon>
        <taxon>Pseudomonadota</taxon>
        <taxon>Gammaproteobacteria</taxon>
        <taxon>Aeromonadales</taxon>
        <taxon>Aeromonadaceae</taxon>
        <taxon>Aeromonas</taxon>
    </lineage>
</organism>
<protein>
    <recommendedName>
        <fullName evidence="1">Glycogen synthase</fullName>
        <ecNumber evidence="1">2.4.1.21</ecNumber>
    </recommendedName>
    <alternativeName>
        <fullName evidence="1">Starch [bacterial glycogen] synthase</fullName>
    </alternativeName>
</protein>
<proteinExistence type="inferred from homology"/>